<keyword id="KW-1185">Reference proteome</keyword>
<keyword id="KW-0687">Ribonucleoprotein</keyword>
<keyword id="KW-0689">Ribosomal protein</keyword>
<name>RL17_SYNJB</name>
<dbReference type="EMBL" id="CP000240">
    <property type="protein sequence ID" value="ABD02545.1"/>
    <property type="molecule type" value="Genomic_DNA"/>
</dbReference>
<dbReference type="RefSeq" id="WP_011433191.1">
    <property type="nucleotide sequence ID" value="NC_007776.1"/>
</dbReference>
<dbReference type="SMR" id="Q2JL73"/>
<dbReference type="STRING" id="321332.CYB_1581"/>
<dbReference type="KEGG" id="cyb:CYB_1581"/>
<dbReference type="eggNOG" id="COG0203">
    <property type="taxonomic scope" value="Bacteria"/>
</dbReference>
<dbReference type="HOGENOM" id="CLU_074407_2_2_3"/>
<dbReference type="OrthoDB" id="9809073at2"/>
<dbReference type="Proteomes" id="UP000001938">
    <property type="component" value="Chromosome"/>
</dbReference>
<dbReference type="GO" id="GO:0022625">
    <property type="term" value="C:cytosolic large ribosomal subunit"/>
    <property type="evidence" value="ECO:0007669"/>
    <property type="project" value="TreeGrafter"/>
</dbReference>
<dbReference type="GO" id="GO:0003735">
    <property type="term" value="F:structural constituent of ribosome"/>
    <property type="evidence" value="ECO:0007669"/>
    <property type="project" value="InterPro"/>
</dbReference>
<dbReference type="GO" id="GO:0006412">
    <property type="term" value="P:translation"/>
    <property type="evidence" value="ECO:0007669"/>
    <property type="project" value="UniProtKB-UniRule"/>
</dbReference>
<dbReference type="FunFam" id="3.90.1030.10:FF:000001">
    <property type="entry name" value="50S ribosomal protein L17"/>
    <property type="match status" value="1"/>
</dbReference>
<dbReference type="Gene3D" id="3.90.1030.10">
    <property type="entry name" value="Ribosomal protein L17"/>
    <property type="match status" value="1"/>
</dbReference>
<dbReference type="HAMAP" id="MF_01368">
    <property type="entry name" value="Ribosomal_bL17"/>
    <property type="match status" value="1"/>
</dbReference>
<dbReference type="InterPro" id="IPR000456">
    <property type="entry name" value="Ribosomal_bL17"/>
</dbReference>
<dbReference type="InterPro" id="IPR047859">
    <property type="entry name" value="Ribosomal_bL17_CS"/>
</dbReference>
<dbReference type="InterPro" id="IPR036373">
    <property type="entry name" value="Ribosomal_bL17_sf"/>
</dbReference>
<dbReference type="NCBIfam" id="TIGR00059">
    <property type="entry name" value="L17"/>
    <property type="match status" value="1"/>
</dbReference>
<dbReference type="PANTHER" id="PTHR14413:SF16">
    <property type="entry name" value="LARGE RIBOSOMAL SUBUNIT PROTEIN BL17M"/>
    <property type="match status" value="1"/>
</dbReference>
<dbReference type="PANTHER" id="PTHR14413">
    <property type="entry name" value="RIBOSOMAL PROTEIN L17"/>
    <property type="match status" value="1"/>
</dbReference>
<dbReference type="Pfam" id="PF01196">
    <property type="entry name" value="Ribosomal_L17"/>
    <property type="match status" value="1"/>
</dbReference>
<dbReference type="SUPFAM" id="SSF64263">
    <property type="entry name" value="Prokaryotic ribosomal protein L17"/>
    <property type="match status" value="1"/>
</dbReference>
<dbReference type="PROSITE" id="PS01167">
    <property type="entry name" value="RIBOSOMAL_L17"/>
    <property type="match status" value="1"/>
</dbReference>
<gene>
    <name evidence="1" type="primary">rplQ</name>
    <name evidence="1" type="synonym">rpl17</name>
    <name type="ordered locus">CYB_1581</name>
</gene>
<reference key="1">
    <citation type="journal article" date="2007" name="ISME J.">
        <title>Population level functional diversity in a microbial community revealed by comparative genomic and metagenomic analyses.</title>
        <authorList>
            <person name="Bhaya D."/>
            <person name="Grossman A.R."/>
            <person name="Steunou A.-S."/>
            <person name="Khuri N."/>
            <person name="Cohan F.M."/>
            <person name="Hamamura N."/>
            <person name="Melendrez M.C."/>
            <person name="Bateson M.M."/>
            <person name="Ward D.M."/>
            <person name="Heidelberg J.F."/>
        </authorList>
    </citation>
    <scope>NUCLEOTIDE SEQUENCE [LARGE SCALE GENOMIC DNA]</scope>
    <source>
        <strain>JA-2-3B'a(2-13)</strain>
    </source>
</reference>
<proteinExistence type="inferred from homology"/>
<comment type="subunit">
    <text evidence="1">Part of the 50S ribosomal subunit. Contacts protein L32.</text>
</comment>
<comment type="similarity">
    <text evidence="1">Belongs to the bacterial ribosomal protein bL17 family.</text>
</comment>
<sequence>MRHRRRTPHLNKPADQRKALMRALTTALLREGRITTTKARAKAIRATTEKMITLAKEGSLAARRQALAYIYDKELVRSLFEQAPERYRDRPGGYTRILRTVHRRGDGAEMAVIELV</sequence>
<evidence type="ECO:0000255" key="1">
    <source>
        <dbReference type="HAMAP-Rule" id="MF_01368"/>
    </source>
</evidence>
<evidence type="ECO:0000305" key="2"/>
<accession>Q2JL73</accession>
<organism>
    <name type="scientific">Synechococcus sp. (strain JA-2-3B'a(2-13))</name>
    <name type="common">Cyanobacteria bacterium Yellowstone B-Prime</name>
    <dbReference type="NCBI Taxonomy" id="321332"/>
    <lineage>
        <taxon>Bacteria</taxon>
        <taxon>Bacillati</taxon>
        <taxon>Cyanobacteriota</taxon>
        <taxon>Cyanophyceae</taxon>
        <taxon>Synechococcales</taxon>
        <taxon>Synechococcaceae</taxon>
        <taxon>Synechococcus</taxon>
    </lineage>
</organism>
<protein>
    <recommendedName>
        <fullName evidence="1">Large ribosomal subunit protein bL17</fullName>
    </recommendedName>
    <alternativeName>
        <fullName evidence="2">50S ribosomal protein L17</fullName>
    </alternativeName>
</protein>
<feature type="chain" id="PRO_0000267954" description="Large ribosomal subunit protein bL17">
    <location>
        <begin position="1"/>
        <end position="116"/>
    </location>
</feature>